<dbReference type="EMBL" id="AE001439">
    <property type="protein sequence ID" value="AAD07029.1"/>
    <property type="molecule type" value="Genomic_DNA"/>
</dbReference>
<dbReference type="PIR" id="G71804">
    <property type="entry name" value="G71804"/>
</dbReference>
<dbReference type="RefSeq" id="WP_000014467.1">
    <property type="nucleotide sequence ID" value="NC_000921.1"/>
</dbReference>
<dbReference type="SMR" id="Q9ZJ71"/>
<dbReference type="KEGG" id="hpj:jhp_1444"/>
<dbReference type="PATRIC" id="fig|85963.30.peg.1099"/>
<dbReference type="eggNOG" id="COG0264">
    <property type="taxonomic scope" value="Bacteria"/>
</dbReference>
<dbReference type="Proteomes" id="UP000000804">
    <property type="component" value="Chromosome"/>
</dbReference>
<dbReference type="GO" id="GO:0005737">
    <property type="term" value="C:cytoplasm"/>
    <property type="evidence" value="ECO:0007669"/>
    <property type="project" value="UniProtKB-SubCell"/>
</dbReference>
<dbReference type="GO" id="GO:0003746">
    <property type="term" value="F:translation elongation factor activity"/>
    <property type="evidence" value="ECO:0007669"/>
    <property type="project" value="UniProtKB-UniRule"/>
</dbReference>
<dbReference type="CDD" id="cd14275">
    <property type="entry name" value="UBA_EF-Ts"/>
    <property type="match status" value="1"/>
</dbReference>
<dbReference type="FunFam" id="1.10.286.20:FF:000004">
    <property type="entry name" value="Elongation factor Ts"/>
    <property type="match status" value="1"/>
</dbReference>
<dbReference type="FunFam" id="1.10.8.10:FF:000001">
    <property type="entry name" value="Elongation factor Ts"/>
    <property type="match status" value="1"/>
</dbReference>
<dbReference type="FunFam" id="3.30.479.20:FF:000029">
    <property type="entry name" value="Elongation factor Ts"/>
    <property type="match status" value="1"/>
</dbReference>
<dbReference type="Gene3D" id="1.10.286.20">
    <property type="match status" value="2"/>
</dbReference>
<dbReference type="Gene3D" id="1.10.8.10">
    <property type="entry name" value="DNA helicase RuvA subunit, C-terminal domain"/>
    <property type="match status" value="1"/>
</dbReference>
<dbReference type="Gene3D" id="3.30.479.20">
    <property type="entry name" value="Elongation factor Ts, dimerisation domain"/>
    <property type="match status" value="3"/>
</dbReference>
<dbReference type="HAMAP" id="MF_00050">
    <property type="entry name" value="EF_Ts"/>
    <property type="match status" value="1"/>
</dbReference>
<dbReference type="InterPro" id="IPR036402">
    <property type="entry name" value="EF-Ts_dimer_sf"/>
</dbReference>
<dbReference type="InterPro" id="IPR001816">
    <property type="entry name" value="Transl_elong_EFTs/EF1B"/>
</dbReference>
<dbReference type="InterPro" id="IPR014039">
    <property type="entry name" value="Transl_elong_EFTs/EF1B_dimer"/>
</dbReference>
<dbReference type="InterPro" id="IPR018101">
    <property type="entry name" value="Transl_elong_Ts_CS"/>
</dbReference>
<dbReference type="InterPro" id="IPR009060">
    <property type="entry name" value="UBA-like_sf"/>
</dbReference>
<dbReference type="NCBIfam" id="TIGR00116">
    <property type="entry name" value="tsf"/>
    <property type="match status" value="1"/>
</dbReference>
<dbReference type="PANTHER" id="PTHR11741">
    <property type="entry name" value="ELONGATION FACTOR TS"/>
    <property type="match status" value="1"/>
</dbReference>
<dbReference type="PANTHER" id="PTHR11741:SF0">
    <property type="entry name" value="ELONGATION FACTOR TS, MITOCHONDRIAL"/>
    <property type="match status" value="1"/>
</dbReference>
<dbReference type="Pfam" id="PF00889">
    <property type="entry name" value="EF_TS"/>
    <property type="match status" value="2"/>
</dbReference>
<dbReference type="SUPFAM" id="SSF54713">
    <property type="entry name" value="Elongation factor Ts (EF-Ts), dimerisation domain"/>
    <property type="match status" value="2"/>
</dbReference>
<dbReference type="SUPFAM" id="SSF46934">
    <property type="entry name" value="UBA-like"/>
    <property type="match status" value="1"/>
</dbReference>
<dbReference type="PROSITE" id="PS01126">
    <property type="entry name" value="EF_TS_1"/>
    <property type="match status" value="1"/>
</dbReference>
<dbReference type="PROSITE" id="PS01127">
    <property type="entry name" value="EF_TS_2"/>
    <property type="match status" value="1"/>
</dbReference>
<evidence type="ECO:0000250" key="1"/>
<evidence type="ECO:0000305" key="2"/>
<organism>
    <name type="scientific">Helicobacter pylori (strain J99 / ATCC 700824)</name>
    <name type="common">Campylobacter pylori J99</name>
    <dbReference type="NCBI Taxonomy" id="85963"/>
    <lineage>
        <taxon>Bacteria</taxon>
        <taxon>Pseudomonadati</taxon>
        <taxon>Campylobacterota</taxon>
        <taxon>Epsilonproteobacteria</taxon>
        <taxon>Campylobacterales</taxon>
        <taxon>Helicobacteraceae</taxon>
        <taxon>Helicobacter</taxon>
    </lineage>
</organism>
<sequence length="355" mass="39859">MSGISAQLVKKLRDLTDAGMMDCKKALVEVAGDLQKAIDFLREKGLSKAAKKADRIAAEGVVALEVAPDFKSAMMVEINSETDFVAKNEGFKELVKKTLETIKTHNIHTTEELLKSPLDNKPFEEYLHSQIAVIGENILVRKIAHLKAPSSHIINGYAHSNARVGVLIAIEYNNEKNAPKVVELARNIAMHAAAMKPQVLDCKDFSLDFVKKETLALIAEIEKDNEEAKRLGKPLKNIPTFGSRIELSDEVLAHQKKAFEDELKEQGKPEKIWDKIVPGKMERFIADNTLIDQRLTLLGQFYVMDDKKTIAQVIADCSKEWDDNLKITEYVRFELGEGIEKKTENFAEEVALQMK</sequence>
<keyword id="KW-0963">Cytoplasm</keyword>
<keyword id="KW-0251">Elongation factor</keyword>
<keyword id="KW-0648">Protein biosynthesis</keyword>
<reference key="1">
    <citation type="journal article" date="1999" name="Nature">
        <title>Genomic sequence comparison of two unrelated isolates of the human gastric pathogen Helicobacter pylori.</title>
        <authorList>
            <person name="Alm R.A."/>
            <person name="Ling L.-S.L."/>
            <person name="Moir D.T."/>
            <person name="King B.L."/>
            <person name="Brown E.D."/>
            <person name="Doig P.C."/>
            <person name="Smith D.R."/>
            <person name="Noonan B."/>
            <person name="Guild B.C."/>
            <person name="deJonge B.L."/>
            <person name="Carmel G."/>
            <person name="Tummino P.J."/>
            <person name="Caruso A."/>
            <person name="Uria-Nickelsen M."/>
            <person name="Mills D.M."/>
            <person name="Ives C."/>
            <person name="Gibson R."/>
            <person name="Merberg D."/>
            <person name="Mills S.D."/>
            <person name="Jiang Q."/>
            <person name="Taylor D.E."/>
            <person name="Vovis G.F."/>
            <person name="Trust T.J."/>
        </authorList>
    </citation>
    <scope>NUCLEOTIDE SEQUENCE [LARGE SCALE GENOMIC DNA]</scope>
    <source>
        <strain>J99 / ATCC 700824</strain>
    </source>
</reference>
<protein>
    <recommendedName>
        <fullName>Elongation factor Ts</fullName>
        <shortName>EF-Ts</shortName>
    </recommendedName>
</protein>
<accession>Q9ZJ71</accession>
<proteinExistence type="inferred from homology"/>
<gene>
    <name type="primary">tsf</name>
    <name type="ordered locus">jhp_1444</name>
</gene>
<comment type="function">
    <text evidence="1">Associates with the EF-Tu.GDP complex and induces the exchange of GDP to GTP. It remains bound to the aminoacyl-tRNA.EF-Tu.GTP complex up to the GTP hydrolysis stage on the ribosome (By similarity).</text>
</comment>
<comment type="subcellular location">
    <subcellularLocation>
        <location evidence="1">Cytoplasm</location>
    </subcellularLocation>
</comment>
<comment type="similarity">
    <text evidence="2">Belongs to the EF-Ts family.</text>
</comment>
<feature type="chain" id="PRO_0000161132" description="Elongation factor Ts">
    <location>
        <begin position="1"/>
        <end position="355"/>
    </location>
</feature>
<feature type="region of interest" description="Involved in Mg(2+) ion dislocation from EF-Tu" evidence="1">
    <location>
        <begin position="82"/>
        <end position="85"/>
    </location>
</feature>
<name>EFTS_HELPJ</name>